<comment type="function">
    <text evidence="1">Joins adenosylcobinamide-GDP and alpha-ribazole to generate adenosylcobalamin (Ado-cobalamin). Also synthesizes adenosylcobalamin 5'-phosphate from adenosylcobinamide-GDP and alpha-ribazole 5'-phosphate.</text>
</comment>
<comment type="catalytic activity">
    <reaction evidence="1">
        <text>alpha-ribazole + adenosylcob(III)inamide-GDP = adenosylcob(III)alamin + GMP + H(+)</text>
        <dbReference type="Rhea" id="RHEA:16049"/>
        <dbReference type="ChEBI" id="CHEBI:10329"/>
        <dbReference type="ChEBI" id="CHEBI:15378"/>
        <dbReference type="ChEBI" id="CHEBI:18408"/>
        <dbReference type="ChEBI" id="CHEBI:58115"/>
        <dbReference type="ChEBI" id="CHEBI:60487"/>
        <dbReference type="EC" id="2.7.8.26"/>
    </reaction>
</comment>
<comment type="catalytic activity">
    <reaction evidence="1">
        <text>alpha-ribazole 5'-phosphate + adenosylcob(III)inamide-GDP = adenosylcob(III)alamin 5'-phosphate + GMP + H(+)</text>
        <dbReference type="Rhea" id="RHEA:23560"/>
        <dbReference type="ChEBI" id="CHEBI:15378"/>
        <dbReference type="ChEBI" id="CHEBI:57918"/>
        <dbReference type="ChEBI" id="CHEBI:58115"/>
        <dbReference type="ChEBI" id="CHEBI:60487"/>
        <dbReference type="ChEBI" id="CHEBI:60493"/>
        <dbReference type="EC" id="2.7.8.26"/>
    </reaction>
</comment>
<comment type="cofactor">
    <cofactor evidence="1">
        <name>Mg(2+)</name>
        <dbReference type="ChEBI" id="CHEBI:18420"/>
    </cofactor>
</comment>
<comment type="pathway">
    <text evidence="1">Cofactor biosynthesis; adenosylcobalamin biosynthesis; adenosylcobalamin from cob(II)yrinate a,c-diamide: step 7/7.</text>
</comment>
<comment type="subcellular location">
    <subcellularLocation>
        <location evidence="1">Cell membrane</location>
        <topology evidence="1">Multi-pass membrane protein</topology>
    </subcellularLocation>
</comment>
<comment type="similarity">
    <text evidence="1">Belongs to the CobS family.</text>
</comment>
<evidence type="ECO:0000255" key="1">
    <source>
        <dbReference type="HAMAP-Rule" id="MF_00719"/>
    </source>
</evidence>
<sequence>MRLKGVLALFSFFTAIPIKSNASLEEIAEYSYISPLIIGISLALIESAVYVLLYRILEALAGIVLLGVVELLRGFNHLDGLLDLGDALMIKGDRERKIKALKDVEIGSGGIGLLLVYLSIQIVALLKLGFSFYTIFHLISSNVLSMTIGLYILSTISPIPESNLGKIFHNKLKGKSTVLLLELIPFISLYNIIVFLVFYMIMHKICRSLGGSSGDIAGASITLSFPLFLLTNEITNLNYSLLSILCYLFLHLH</sequence>
<keyword id="KW-1003">Cell membrane</keyword>
<keyword id="KW-0169">Cobalamin biosynthesis</keyword>
<keyword id="KW-0460">Magnesium</keyword>
<keyword id="KW-0472">Membrane</keyword>
<keyword id="KW-0808">Transferase</keyword>
<keyword id="KW-0812">Transmembrane</keyword>
<keyword id="KW-1133">Transmembrane helix</keyword>
<organism>
    <name type="scientific">Saccharolobus islandicus (strain Y.G.57.14 / Yellowstone #1)</name>
    <name type="common">Sulfolobus islandicus</name>
    <dbReference type="NCBI Taxonomy" id="439386"/>
    <lineage>
        <taxon>Archaea</taxon>
        <taxon>Thermoproteota</taxon>
        <taxon>Thermoprotei</taxon>
        <taxon>Sulfolobales</taxon>
        <taxon>Sulfolobaceae</taxon>
        <taxon>Saccharolobus</taxon>
    </lineage>
</organism>
<feature type="chain" id="PRO_1000212701" description="Adenosylcobinamide-GDP ribazoletransferase">
    <location>
        <begin position="1"/>
        <end position="253"/>
    </location>
</feature>
<feature type="transmembrane region" description="Helical" evidence="1">
    <location>
        <begin position="33"/>
        <end position="53"/>
    </location>
</feature>
<feature type="transmembrane region" description="Helical" evidence="1">
    <location>
        <begin position="106"/>
        <end position="126"/>
    </location>
</feature>
<feature type="transmembrane region" description="Helical" evidence="1">
    <location>
        <begin position="132"/>
        <end position="152"/>
    </location>
</feature>
<feature type="transmembrane region" description="Helical" evidence="1">
    <location>
        <begin position="178"/>
        <end position="198"/>
    </location>
</feature>
<gene>
    <name evidence="1" type="primary">cobS</name>
    <name type="ordered locus">YG5714_2259</name>
</gene>
<protein>
    <recommendedName>
        <fullName evidence="1">Adenosylcobinamide-GDP ribazoletransferase</fullName>
        <ecNumber evidence="1">2.7.8.26</ecNumber>
    </recommendedName>
    <alternativeName>
        <fullName evidence="1">Cobalamin synthase</fullName>
    </alternativeName>
    <alternativeName>
        <fullName evidence="1">Cobalamin-5'-phosphate synthase</fullName>
    </alternativeName>
</protein>
<name>COBS_SACI7</name>
<accession>C3N903</accession>
<reference key="1">
    <citation type="journal article" date="2009" name="Proc. Natl. Acad. Sci. U.S.A.">
        <title>Biogeography of the Sulfolobus islandicus pan-genome.</title>
        <authorList>
            <person name="Reno M.L."/>
            <person name="Held N.L."/>
            <person name="Fields C.J."/>
            <person name="Burke P.V."/>
            <person name="Whitaker R.J."/>
        </authorList>
    </citation>
    <scope>NUCLEOTIDE SEQUENCE [LARGE SCALE GENOMIC DNA]</scope>
    <source>
        <strain>Y.G.57.14 / Yellowstone #1</strain>
    </source>
</reference>
<proteinExistence type="inferred from homology"/>
<dbReference type="EC" id="2.7.8.26" evidence="1"/>
<dbReference type="EMBL" id="CP001403">
    <property type="protein sequence ID" value="ACP46508.1"/>
    <property type="molecule type" value="Genomic_DNA"/>
</dbReference>
<dbReference type="RefSeq" id="WP_012714214.1">
    <property type="nucleotide sequence ID" value="NC_012622.1"/>
</dbReference>
<dbReference type="GeneID" id="7809007"/>
<dbReference type="KEGG" id="siy:YG5714_2259"/>
<dbReference type="HOGENOM" id="CLU_057426_2_0_2"/>
<dbReference type="UniPathway" id="UPA00148">
    <property type="reaction ID" value="UER00238"/>
</dbReference>
<dbReference type="Proteomes" id="UP000002308">
    <property type="component" value="Chromosome"/>
</dbReference>
<dbReference type="GO" id="GO:0005886">
    <property type="term" value="C:plasma membrane"/>
    <property type="evidence" value="ECO:0007669"/>
    <property type="project" value="UniProtKB-SubCell"/>
</dbReference>
<dbReference type="GO" id="GO:0051073">
    <property type="term" value="F:adenosylcobinamide-GDP ribazoletransferase activity"/>
    <property type="evidence" value="ECO:0007669"/>
    <property type="project" value="UniProtKB-UniRule"/>
</dbReference>
<dbReference type="GO" id="GO:0008818">
    <property type="term" value="F:cobalamin 5'-phosphate synthase activity"/>
    <property type="evidence" value="ECO:0007669"/>
    <property type="project" value="UniProtKB-UniRule"/>
</dbReference>
<dbReference type="GO" id="GO:0009236">
    <property type="term" value="P:cobalamin biosynthetic process"/>
    <property type="evidence" value="ECO:0007669"/>
    <property type="project" value="UniProtKB-UniRule"/>
</dbReference>
<dbReference type="HAMAP" id="MF_00719">
    <property type="entry name" value="CobS"/>
    <property type="match status" value="1"/>
</dbReference>
<dbReference type="InterPro" id="IPR003805">
    <property type="entry name" value="CobS"/>
</dbReference>
<dbReference type="NCBIfam" id="TIGR00317">
    <property type="entry name" value="cobS"/>
    <property type="match status" value="1"/>
</dbReference>
<dbReference type="PANTHER" id="PTHR34148">
    <property type="entry name" value="ADENOSYLCOBINAMIDE-GDP RIBAZOLETRANSFERASE"/>
    <property type="match status" value="1"/>
</dbReference>
<dbReference type="PANTHER" id="PTHR34148:SF1">
    <property type="entry name" value="ADENOSYLCOBINAMIDE-GDP RIBAZOLETRANSFERASE"/>
    <property type="match status" value="1"/>
</dbReference>
<dbReference type="Pfam" id="PF02654">
    <property type="entry name" value="CobS"/>
    <property type="match status" value="1"/>
</dbReference>